<name>GLPK_BACSU</name>
<reference key="1">
    <citation type="journal article" date="1990" name="J. Gen. Microbiol.">
        <title>Glycerol catabolism in Bacillus subtilis: nucleotide sequence of the genes encoding glycerol kinase (glpK) and glycerol-3-phosphate dehydrogenase (glpD).</title>
        <authorList>
            <person name="Holmberg C."/>
            <person name="Beijer L."/>
            <person name="Rutberg B."/>
            <person name="Rutberg L."/>
        </authorList>
    </citation>
    <scope>NUCLEOTIDE SEQUENCE [GENOMIC DNA]</scope>
</reference>
<reference key="2">
    <citation type="journal article" date="1998" name="Microbiology">
        <title>The 172 kb prkA-addAB region from 83 degrees to 97 degrees of the Bacillus subtilis chromosome contains several dysfunctional genes, the glyB marker, many genes encoding transporter proteins, and the ubiquitous hit gene.</title>
        <authorList>
            <person name="Noback M.A."/>
            <person name="Holsappel S."/>
            <person name="Kiewiet R."/>
            <person name="Terpstra P."/>
            <person name="Wambutt R."/>
            <person name="Wedler H."/>
            <person name="Venema G."/>
            <person name="Bron S."/>
        </authorList>
    </citation>
    <scope>NUCLEOTIDE SEQUENCE [GENOMIC DNA]</scope>
    <source>
        <strain>168</strain>
    </source>
</reference>
<reference key="3">
    <citation type="journal article" date="1997" name="Nature">
        <title>The complete genome sequence of the Gram-positive bacterium Bacillus subtilis.</title>
        <authorList>
            <person name="Kunst F."/>
            <person name="Ogasawara N."/>
            <person name="Moszer I."/>
            <person name="Albertini A.M."/>
            <person name="Alloni G."/>
            <person name="Azevedo V."/>
            <person name="Bertero M.G."/>
            <person name="Bessieres P."/>
            <person name="Bolotin A."/>
            <person name="Borchert S."/>
            <person name="Borriss R."/>
            <person name="Boursier L."/>
            <person name="Brans A."/>
            <person name="Braun M."/>
            <person name="Brignell S.C."/>
            <person name="Bron S."/>
            <person name="Brouillet S."/>
            <person name="Bruschi C.V."/>
            <person name="Caldwell B."/>
            <person name="Capuano V."/>
            <person name="Carter N.M."/>
            <person name="Choi S.-K."/>
            <person name="Codani J.-J."/>
            <person name="Connerton I.F."/>
            <person name="Cummings N.J."/>
            <person name="Daniel R.A."/>
            <person name="Denizot F."/>
            <person name="Devine K.M."/>
            <person name="Duesterhoeft A."/>
            <person name="Ehrlich S.D."/>
            <person name="Emmerson P.T."/>
            <person name="Entian K.-D."/>
            <person name="Errington J."/>
            <person name="Fabret C."/>
            <person name="Ferrari E."/>
            <person name="Foulger D."/>
            <person name="Fritz C."/>
            <person name="Fujita M."/>
            <person name="Fujita Y."/>
            <person name="Fuma S."/>
            <person name="Galizzi A."/>
            <person name="Galleron N."/>
            <person name="Ghim S.-Y."/>
            <person name="Glaser P."/>
            <person name="Goffeau A."/>
            <person name="Golightly E.J."/>
            <person name="Grandi G."/>
            <person name="Guiseppi G."/>
            <person name="Guy B.J."/>
            <person name="Haga K."/>
            <person name="Haiech J."/>
            <person name="Harwood C.R."/>
            <person name="Henaut A."/>
            <person name="Hilbert H."/>
            <person name="Holsappel S."/>
            <person name="Hosono S."/>
            <person name="Hullo M.-F."/>
            <person name="Itaya M."/>
            <person name="Jones L.-M."/>
            <person name="Joris B."/>
            <person name="Karamata D."/>
            <person name="Kasahara Y."/>
            <person name="Klaerr-Blanchard M."/>
            <person name="Klein C."/>
            <person name="Kobayashi Y."/>
            <person name="Koetter P."/>
            <person name="Koningstein G."/>
            <person name="Krogh S."/>
            <person name="Kumano M."/>
            <person name="Kurita K."/>
            <person name="Lapidus A."/>
            <person name="Lardinois S."/>
            <person name="Lauber J."/>
            <person name="Lazarevic V."/>
            <person name="Lee S.-M."/>
            <person name="Levine A."/>
            <person name="Liu H."/>
            <person name="Masuda S."/>
            <person name="Mauel C."/>
            <person name="Medigue C."/>
            <person name="Medina N."/>
            <person name="Mellado R.P."/>
            <person name="Mizuno M."/>
            <person name="Moestl D."/>
            <person name="Nakai S."/>
            <person name="Noback M."/>
            <person name="Noone D."/>
            <person name="O'Reilly M."/>
            <person name="Ogawa K."/>
            <person name="Ogiwara A."/>
            <person name="Oudega B."/>
            <person name="Park S.-H."/>
            <person name="Parro V."/>
            <person name="Pohl T.M."/>
            <person name="Portetelle D."/>
            <person name="Porwollik S."/>
            <person name="Prescott A.M."/>
            <person name="Presecan E."/>
            <person name="Pujic P."/>
            <person name="Purnelle B."/>
            <person name="Rapoport G."/>
            <person name="Rey M."/>
            <person name="Reynolds S."/>
            <person name="Rieger M."/>
            <person name="Rivolta C."/>
            <person name="Rocha E."/>
            <person name="Roche B."/>
            <person name="Rose M."/>
            <person name="Sadaie Y."/>
            <person name="Sato T."/>
            <person name="Scanlan E."/>
            <person name="Schleich S."/>
            <person name="Schroeter R."/>
            <person name="Scoffone F."/>
            <person name="Sekiguchi J."/>
            <person name="Sekowska A."/>
            <person name="Seror S.J."/>
            <person name="Serror P."/>
            <person name="Shin B.-S."/>
            <person name="Soldo B."/>
            <person name="Sorokin A."/>
            <person name="Tacconi E."/>
            <person name="Takagi T."/>
            <person name="Takahashi H."/>
            <person name="Takemaru K."/>
            <person name="Takeuchi M."/>
            <person name="Tamakoshi A."/>
            <person name="Tanaka T."/>
            <person name="Terpstra P."/>
            <person name="Tognoni A."/>
            <person name="Tosato V."/>
            <person name="Uchiyama S."/>
            <person name="Vandenbol M."/>
            <person name="Vannier F."/>
            <person name="Vassarotti A."/>
            <person name="Viari A."/>
            <person name="Wambutt R."/>
            <person name="Wedler E."/>
            <person name="Wedler H."/>
            <person name="Weitzenegger T."/>
            <person name="Winters P."/>
            <person name="Wipat A."/>
            <person name="Yamamoto H."/>
            <person name="Yamane K."/>
            <person name="Yasumoto K."/>
            <person name="Yata K."/>
            <person name="Yoshida K."/>
            <person name="Yoshikawa H.-F."/>
            <person name="Zumstein E."/>
            <person name="Yoshikawa H."/>
            <person name="Danchin A."/>
        </authorList>
    </citation>
    <scope>NUCLEOTIDE SEQUENCE [LARGE SCALE GENOMIC DNA]</scope>
    <source>
        <strain>168</strain>
    </source>
</reference>
<reference key="4">
    <citation type="journal article" date="2009" name="Microbiology">
        <title>From a consortium sequence to a unified sequence: the Bacillus subtilis 168 reference genome a decade later.</title>
        <authorList>
            <person name="Barbe V."/>
            <person name="Cruveiller S."/>
            <person name="Kunst F."/>
            <person name="Lenoble P."/>
            <person name="Meurice G."/>
            <person name="Sekowska A."/>
            <person name="Vallenet D."/>
            <person name="Wang T."/>
            <person name="Moszer I."/>
            <person name="Medigue C."/>
            <person name="Danchin A."/>
        </authorList>
    </citation>
    <scope>SEQUENCE REVISION TO 201</scope>
</reference>
<reference key="5">
    <citation type="journal article" date="1993" name="J. Gen. Microbiol.">
        <title>The glpP and glpF genes of the glycerol regulon in Bacillus subtilis.</title>
        <authorList>
            <person name="Beijer L."/>
            <person name="Nilsson R.-P."/>
            <person name="Holmberg C."/>
            <person name="Rutberg L."/>
        </authorList>
    </citation>
    <scope>NUCLEOTIDE SEQUENCE [GENOMIC DNA] OF 1-17</scope>
</reference>
<reference key="6">
    <citation type="journal article" date="1995" name="Microbiology">
        <title>Mutations in the glycerol kinase gene restore the ability of a ptsGHI mutant of Bacillus subtilis to grow on glycerol.</title>
        <authorList>
            <person name="Wehtje C."/>
            <person name="Beijer L."/>
            <person name="Nilsson R.P."/>
            <person name="Rutberg B."/>
        </authorList>
    </citation>
    <scope>MUTAGENESIS OF HIS-230 AND PHE-232</scope>
</reference>
<comment type="function">
    <text evidence="1">Key enzyme in the regulation of glycerol uptake and metabolism. Catalyzes the phosphorylation of glycerol to yield sn-glycerol 3-phosphate.</text>
</comment>
<comment type="catalytic activity">
    <reaction evidence="1">
        <text>glycerol + ATP = sn-glycerol 3-phosphate + ADP + H(+)</text>
        <dbReference type="Rhea" id="RHEA:21644"/>
        <dbReference type="ChEBI" id="CHEBI:15378"/>
        <dbReference type="ChEBI" id="CHEBI:17754"/>
        <dbReference type="ChEBI" id="CHEBI:30616"/>
        <dbReference type="ChEBI" id="CHEBI:57597"/>
        <dbReference type="ChEBI" id="CHEBI:456216"/>
        <dbReference type="EC" id="2.7.1.30"/>
    </reaction>
</comment>
<comment type="activity regulation">
    <text evidence="1">Activated by phosphorylation and inhibited by fructose 1,6-bisphosphate (FBP).</text>
</comment>
<comment type="pathway">
    <text evidence="1">Polyol metabolism; glycerol degradation via glycerol kinase pathway; sn-glycerol 3-phosphate from glycerol: step 1/1.</text>
</comment>
<comment type="subunit">
    <text evidence="1">Homotetramer and homodimer (in equilibrium).</text>
</comment>
<comment type="PTM">
    <text evidence="1">The phosphoenolpyruvate-dependent sugar phosphotransferase system (PTS), including enzyme I, and histidine-containing protein (HPr) are required for the phosphorylation, which leads to the activation of the enzyme.</text>
</comment>
<comment type="similarity">
    <text evidence="1">Belongs to the FGGY kinase family.</text>
</comment>
<organism>
    <name type="scientific">Bacillus subtilis (strain 168)</name>
    <dbReference type="NCBI Taxonomy" id="224308"/>
    <lineage>
        <taxon>Bacteria</taxon>
        <taxon>Bacillati</taxon>
        <taxon>Bacillota</taxon>
        <taxon>Bacilli</taxon>
        <taxon>Bacillales</taxon>
        <taxon>Bacillaceae</taxon>
        <taxon>Bacillus</taxon>
    </lineage>
</organism>
<dbReference type="EC" id="2.7.1.30" evidence="1"/>
<dbReference type="EMBL" id="M34393">
    <property type="protein sequence ID" value="AAA22486.1"/>
    <property type="molecule type" value="Genomic_DNA"/>
</dbReference>
<dbReference type="EMBL" id="Y14079">
    <property type="protein sequence ID" value="CAA74429.1"/>
    <property type="molecule type" value="Genomic_DNA"/>
</dbReference>
<dbReference type="EMBL" id="AL009126">
    <property type="protein sequence ID" value="CAB12757.2"/>
    <property type="molecule type" value="Genomic_DNA"/>
</dbReference>
<dbReference type="EMBL" id="M99611">
    <property type="protein sequence ID" value="AAA22491.1"/>
    <property type="molecule type" value="Genomic_DNA"/>
</dbReference>
<dbReference type="PIR" id="B45868">
    <property type="entry name" value="B45868"/>
</dbReference>
<dbReference type="RefSeq" id="NP_388810.2">
    <property type="nucleotide sequence ID" value="NC_000964.3"/>
</dbReference>
<dbReference type="RefSeq" id="WP_003233384.1">
    <property type="nucleotide sequence ID" value="NZ_OZ025638.1"/>
</dbReference>
<dbReference type="SMR" id="P18157"/>
<dbReference type="FunCoup" id="P18157">
    <property type="interactions" value="529"/>
</dbReference>
<dbReference type="STRING" id="224308.BSU09290"/>
<dbReference type="jPOST" id="P18157"/>
<dbReference type="PaxDb" id="224308-BSU09290"/>
<dbReference type="EnsemblBacteria" id="CAB12757">
    <property type="protein sequence ID" value="CAB12757"/>
    <property type="gene ID" value="BSU_09290"/>
</dbReference>
<dbReference type="GeneID" id="939741"/>
<dbReference type="KEGG" id="bsu:BSU09290"/>
<dbReference type="PATRIC" id="fig|224308.179.peg.1002"/>
<dbReference type="eggNOG" id="COG0554">
    <property type="taxonomic scope" value="Bacteria"/>
</dbReference>
<dbReference type="InParanoid" id="P18157"/>
<dbReference type="OrthoDB" id="9805576at2"/>
<dbReference type="PhylomeDB" id="P18157"/>
<dbReference type="BioCyc" id="BSUB:BSU09290-MONOMER"/>
<dbReference type="UniPathway" id="UPA00618">
    <property type="reaction ID" value="UER00672"/>
</dbReference>
<dbReference type="Proteomes" id="UP000001570">
    <property type="component" value="Chromosome"/>
</dbReference>
<dbReference type="GO" id="GO:0005829">
    <property type="term" value="C:cytosol"/>
    <property type="evidence" value="ECO:0000318"/>
    <property type="project" value="GO_Central"/>
</dbReference>
<dbReference type="GO" id="GO:0005524">
    <property type="term" value="F:ATP binding"/>
    <property type="evidence" value="ECO:0007669"/>
    <property type="project" value="UniProtKB-UniRule"/>
</dbReference>
<dbReference type="GO" id="GO:0004370">
    <property type="term" value="F:glycerol kinase activity"/>
    <property type="evidence" value="ECO:0000250"/>
    <property type="project" value="UniProtKB"/>
</dbReference>
<dbReference type="GO" id="GO:0019563">
    <property type="term" value="P:glycerol catabolic process"/>
    <property type="evidence" value="ECO:0000318"/>
    <property type="project" value="GO_Central"/>
</dbReference>
<dbReference type="GO" id="GO:0006071">
    <property type="term" value="P:glycerol metabolic process"/>
    <property type="evidence" value="ECO:0000250"/>
    <property type="project" value="UniProtKB"/>
</dbReference>
<dbReference type="GO" id="GO:0006072">
    <property type="term" value="P:glycerol-3-phosphate metabolic process"/>
    <property type="evidence" value="ECO:0007669"/>
    <property type="project" value="InterPro"/>
</dbReference>
<dbReference type="CDD" id="cd07786">
    <property type="entry name" value="FGGY_EcGK_like"/>
    <property type="match status" value="1"/>
</dbReference>
<dbReference type="FunFam" id="3.30.420.40:FF:000007">
    <property type="entry name" value="Glycerol kinase"/>
    <property type="match status" value="1"/>
</dbReference>
<dbReference type="FunFam" id="3.30.420.40:FF:000008">
    <property type="entry name" value="Glycerol kinase"/>
    <property type="match status" value="1"/>
</dbReference>
<dbReference type="Gene3D" id="3.30.420.40">
    <property type="match status" value="2"/>
</dbReference>
<dbReference type="HAMAP" id="MF_00186">
    <property type="entry name" value="Glycerol_kin"/>
    <property type="match status" value="1"/>
</dbReference>
<dbReference type="InterPro" id="IPR043129">
    <property type="entry name" value="ATPase_NBD"/>
</dbReference>
<dbReference type="InterPro" id="IPR000577">
    <property type="entry name" value="Carb_kinase_FGGY"/>
</dbReference>
<dbReference type="InterPro" id="IPR018483">
    <property type="entry name" value="Carb_kinase_FGGY_CS"/>
</dbReference>
<dbReference type="InterPro" id="IPR018485">
    <property type="entry name" value="FGGY_C"/>
</dbReference>
<dbReference type="InterPro" id="IPR018484">
    <property type="entry name" value="FGGY_N"/>
</dbReference>
<dbReference type="InterPro" id="IPR005999">
    <property type="entry name" value="Glycerol_kin"/>
</dbReference>
<dbReference type="NCBIfam" id="TIGR01311">
    <property type="entry name" value="glycerol_kin"/>
    <property type="match status" value="1"/>
</dbReference>
<dbReference type="NCBIfam" id="NF000756">
    <property type="entry name" value="PRK00047.1"/>
    <property type="match status" value="1"/>
</dbReference>
<dbReference type="PANTHER" id="PTHR10196:SF69">
    <property type="entry name" value="GLYCEROL KINASE"/>
    <property type="match status" value="1"/>
</dbReference>
<dbReference type="PANTHER" id="PTHR10196">
    <property type="entry name" value="SUGAR KINASE"/>
    <property type="match status" value="1"/>
</dbReference>
<dbReference type="Pfam" id="PF02782">
    <property type="entry name" value="FGGY_C"/>
    <property type="match status" value="1"/>
</dbReference>
<dbReference type="Pfam" id="PF00370">
    <property type="entry name" value="FGGY_N"/>
    <property type="match status" value="1"/>
</dbReference>
<dbReference type="PIRSF" id="PIRSF000538">
    <property type="entry name" value="GlpK"/>
    <property type="match status" value="1"/>
</dbReference>
<dbReference type="SUPFAM" id="SSF53067">
    <property type="entry name" value="Actin-like ATPase domain"/>
    <property type="match status" value="2"/>
</dbReference>
<dbReference type="PROSITE" id="PS00933">
    <property type="entry name" value="FGGY_KINASES_1"/>
    <property type="match status" value="1"/>
</dbReference>
<dbReference type="PROSITE" id="PS00445">
    <property type="entry name" value="FGGY_KINASES_2"/>
    <property type="match status" value="1"/>
</dbReference>
<evidence type="ECO:0000255" key="1">
    <source>
        <dbReference type="HAMAP-Rule" id="MF_00186"/>
    </source>
</evidence>
<evidence type="ECO:0000269" key="2">
    <source>
    </source>
</evidence>
<evidence type="ECO:0000305" key="3"/>
<accession>P18157</accession>
<protein>
    <recommendedName>
        <fullName evidence="1">Glycerol kinase</fullName>
        <ecNumber evidence="1">2.7.1.30</ecNumber>
    </recommendedName>
    <alternativeName>
        <fullName evidence="1">ATP:glycerol 3-phosphotransferase</fullName>
    </alternativeName>
    <alternativeName>
        <fullName evidence="1">Glycerokinase</fullName>
        <shortName evidence="1">GK</shortName>
    </alternativeName>
</protein>
<gene>
    <name evidence="1" type="primary">glpK</name>
    <name type="ordered locus">BSU09290</name>
</gene>
<keyword id="KW-0067">ATP-binding</keyword>
<keyword id="KW-0319">Glycerol metabolism</keyword>
<keyword id="KW-0418">Kinase</keyword>
<keyword id="KW-0547">Nucleotide-binding</keyword>
<keyword id="KW-0597">Phosphoprotein</keyword>
<keyword id="KW-1185">Reference proteome</keyword>
<keyword id="KW-0808">Transferase</keyword>
<proteinExistence type="evidence at protein level"/>
<sequence length="496" mass="55080">METYILSLDQGTTSSRAILFNKEGKIVHSAQKEFTQYFPHPGWVEHNANEIWGSVLAVIASVISESGISASQIAGIGITNQRETTVVWDKDTGSPVYNAIVWQSRQTSGICEELREKGYNDKFREKTGLLIDPYFSGTKVKWILDNVEGAREKAEKGELLFGTIDTWLIWKMSGGKAHVTDYSNASRTLMFNIYDLKWDDELLDILGVPKSMLPEVKPSSHVYAETVDYHFFGKNIPIAGAAGDQQSALFGQACFEEGMGKNTYGTGCFMLMNTGEKAIKSEHGLLTTIAWGIDGKVNYALEGSIFVAGSAIQWLRDGLRMFQDSSLSESYAEKVDSTDGVYVVPAFVGLGTPYWDSDVRGSVFGLTRGTTKEHFIRATLESLAYQTKDVLDAMEADSNISLKTLRVDGGAVKNNFLMQFQGDLLNVPVERPEINETTALGAAYLAGIAVGFWKDRSEIANQWNLDKRFEPELEEEKRNELYKGWQKAVKAAMAFK</sequence>
<feature type="chain" id="PRO_0000059434" description="Glycerol kinase">
    <location>
        <begin position="1"/>
        <end position="496"/>
    </location>
</feature>
<feature type="binding site" evidence="1">
    <location>
        <position position="12"/>
    </location>
    <ligand>
        <name>ADP</name>
        <dbReference type="ChEBI" id="CHEBI:456216"/>
    </ligand>
</feature>
<feature type="binding site" evidence="1">
    <location>
        <position position="12"/>
    </location>
    <ligand>
        <name>ATP</name>
        <dbReference type="ChEBI" id="CHEBI:30616"/>
    </ligand>
</feature>
<feature type="binding site" evidence="1">
    <location>
        <position position="12"/>
    </location>
    <ligand>
        <name>sn-glycerol 3-phosphate</name>
        <dbReference type="ChEBI" id="CHEBI:57597"/>
    </ligand>
</feature>
<feature type="binding site" evidence="1">
    <location>
        <position position="13"/>
    </location>
    <ligand>
        <name>ATP</name>
        <dbReference type="ChEBI" id="CHEBI:30616"/>
    </ligand>
</feature>
<feature type="binding site" evidence="1">
    <location>
        <position position="14"/>
    </location>
    <ligand>
        <name>ATP</name>
        <dbReference type="ChEBI" id="CHEBI:30616"/>
    </ligand>
</feature>
<feature type="binding site" evidence="1">
    <location>
        <position position="16"/>
    </location>
    <ligand>
        <name>ADP</name>
        <dbReference type="ChEBI" id="CHEBI:456216"/>
    </ligand>
</feature>
<feature type="binding site" evidence="1">
    <location>
        <position position="82"/>
    </location>
    <ligand>
        <name>glycerol</name>
        <dbReference type="ChEBI" id="CHEBI:17754"/>
    </ligand>
</feature>
<feature type="binding site" evidence="1">
    <location>
        <position position="82"/>
    </location>
    <ligand>
        <name>sn-glycerol 3-phosphate</name>
        <dbReference type="ChEBI" id="CHEBI:57597"/>
    </ligand>
</feature>
<feature type="binding site" evidence="1">
    <location>
        <position position="83"/>
    </location>
    <ligand>
        <name>glycerol</name>
        <dbReference type="ChEBI" id="CHEBI:17754"/>
    </ligand>
</feature>
<feature type="binding site" evidence="1">
    <location>
        <position position="83"/>
    </location>
    <ligand>
        <name>sn-glycerol 3-phosphate</name>
        <dbReference type="ChEBI" id="CHEBI:57597"/>
    </ligand>
</feature>
<feature type="binding site" evidence="1">
    <location>
        <position position="134"/>
    </location>
    <ligand>
        <name>glycerol</name>
        <dbReference type="ChEBI" id="CHEBI:17754"/>
    </ligand>
</feature>
<feature type="binding site" evidence="1">
    <location>
        <position position="134"/>
    </location>
    <ligand>
        <name>sn-glycerol 3-phosphate</name>
        <dbReference type="ChEBI" id="CHEBI:57597"/>
    </ligand>
</feature>
<feature type="binding site" evidence="1">
    <location>
        <position position="244"/>
    </location>
    <ligand>
        <name>glycerol</name>
        <dbReference type="ChEBI" id="CHEBI:17754"/>
    </ligand>
</feature>
<feature type="binding site" evidence="1">
    <location>
        <position position="244"/>
    </location>
    <ligand>
        <name>sn-glycerol 3-phosphate</name>
        <dbReference type="ChEBI" id="CHEBI:57597"/>
    </ligand>
</feature>
<feature type="binding site" evidence="1">
    <location>
        <position position="245"/>
    </location>
    <ligand>
        <name>glycerol</name>
        <dbReference type="ChEBI" id="CHEBI:17754"/>
    </ligand>
</feature>
<feature type="binding site" evidence="1">
    <location>
        <position position="266"/>
    </location>
    <ligand>
        <name>ADP</name>
        <dbReference type="ChEBI" id="CHEBI:456216"/>
    </ligand>
</feature>
<feature type="binding site" evidence="1">
    <location>
        <position position="266"/>
    </location>
    <ligand>
        <name>ATP</name>
        <dbReference type="ChEBI" id="CHEBI:30616"/>
    </ligand>
</feature>
<feature type="binding site" evidence="1">
    <location>
        <position position="309"/>
    </location>
    <ligand>
        <name>ADP</name>
        <dbReference type="ChEBI" id="CHEBI:456216"/>
    </ligand>
</feature>
<feature type="binding site" evidence="1">
    <location>
        <position position="309"/>
    </location>
    <ligand>
        <name>ATP</name>
        <dbReference type="ChEBI" id="CHEBI:30616"/>
    </ligand>
</feature>
<feature type="binding site" evidence="1">
    <location>
        <position position="313"/>
    </location>
    <ligand>
        <name>ATP</name>
        <dbReference type="ChEBI" id="CHEBI:30616"/>
    </ligand>
</feature>
<feature type="binding site" evidence="1">
    <location>
        <position position="410"/>
    </location>
    <ligand>
        <name>ADP</name>
        <dbReference type="ChEBI" id="CHEBI:456216"/>
    </ligand>
</feature>
<feature type="binding site" evidence="1">
    <location>
        <position position="410"/>
    </location>
    <ligand>
        <name>ATP</name>
        <dbReference type="ChEBI" id="CHEBI:30616"/>
    </ligand>
</feature>
<feature type="binding site" evidence="1">
    <location>
        <position position="414"/>
    </location>
    <ligand>
        <name>ADP</name>
        <dbReference type="ChEBI" id="CHEBI:456216"/>
    </ligand>
</feature>
<feature type="modified residue" description="Phosphohistidine; by HPr" evidence="1">
    <location>
        <position position="230"/>
    </location>
</feature>
<feature type="mutagenesis site" description="Increased activity." evidence="2">
    <original>H</original>
    <variation>R</variation>
    <location>
        <position position="230"/>
    </location>
</feature>
<feature type="mutagenesis site" description="Increased activity." evidence="2">
    <original>F</original>
    <variation>S</variation>
    <location>
        <position position="232"/>
    </location>
</feature>
<feature type="sequence conflict" description="In Ref. 1; AAA22486 and 2; CAA74429." evidence="3" ref="1 2">
    <original>E</original>
    <variation>Q</variation>
    <location>
        <position position="201"/>
    </location>
</feature>